<feature type="chain" id="PRO_1000049277" description="Small ribosomal subunit protein bS16">
    <location>
        <begin position="1"/>
        <end position="90"/>
    </location>
</feature>
<sequence>MSVKIRLTRMGSKKKPFYRINVADSRAPRDGKFIETVGTYNPLVTENQVTLKEERVLEWLSNGAQPSDTVRNLLSKAGVMKKFHESKLSK</sequence>
<reference key="1">
    <citation type="journal article" date="2007" name="J. Bacteriol.">
        <title>The complete genome sequence of the lactic acid bacterial paradigm Lactococcus lactis subsp. cremoris MG1363.</title>
        <authorList>
            <person name="Wegmann U."/>
            <person name="O'Connell-Motherway M."/>
            <person name="Zomer A."/>
            <person name="Buist G."/>
            <person name="Shearman C."/>
            <person name="Canchaya C."/>
            <person name="Ventura M."/>
            <person name="Goesmann A."/>
            <person name="Gasson M.J."/>
            <person name="Kuipers O.P."/>
            <person name="van Sinderen D."/>
            <person name="Kok J."/>
        </authorList>
    </citation>
    <scope>NUCLEOTIDE SEQUENCE [LARGE SCALE GENOMIC DNA]</scope>
    <source>
        <strain>MG1363</strain>
    </source>
</reference>
<evidence type="ECO:0000255" key="1">
    <source>
        <dbReference type="HAMAP-Rule" id="MF_00385"/>
    </source>
</evidence>
<evidence type="ECO:0000305" key="2"/>
<comment type="similarity">
    <text evidence="1">Belongs to the bacterial ribosomal protein bS16 family.</text>
</comment>
<protein>
    <recommendedName>
        <fullName evidence="1">Small ribosomal subunit protein bS16</fullName>
    </recommendedName>
    <alternativeName>
        <fullName evidence="2">30S ribosomal protein S16</fullName>
    </alternativeName>
</protein>
<organism>
    <name type="scientific">Lactococcus lactis subsp. cremoris (strain MG1363)</name>
    <dbReference type="NCBI Taxonomy" id="416870"/>
    <lineage>
        <taxon>Bacteria</taxon>
        <taxon>Bacillati</taxon>
        <taxon>Bacillota</taxon>
        <taxon>Bacilli</taxon>
        <taxon>Lactobacillales</taxon>
        <taxon>Streptococcaceae</taxon>
        <taxon>Lactococcus</taxon>
        <taxon>Lactococcus cremoris subsp. cremoris</taxon>
    </lineage>
</organism>
<gene>
    <name evidence="1" type="primary">rpsP</name>
    <name type="ordered locus">llmg_0932</name>
</gene>
<keyword id="KW-0002">3D-structure</keyword>
<keyword id="KW-0687">Ribonucleoprotein</keyword>
<keyword id="KW-0689">Ribosomal protein</keyword>
<proteinExistence type="evidence at protein level"/>
<name>RS16_LACLM</name>
<dbReference type="EMBL" id="AM406671">
    <property type="protein sequence ID" value="CAL97526.1"/>
    <property type="molecule type" value="Genomic_DNA"/>
</dbReference>
<dbReference type="RefSeq" id="WP_011834878.1">
    <property type="nucleotide sequence ID" value="NC_009004.1"/>
</dbReference>
<dbReference type="PDB" id="5MYJ">
    <property type="method" value="EM"/>
    <property type="resolution" value="5.60 A"/>
    <property type="chains" value="AP=1-90"/>
</dbReference>
<dbReference type="PDBsum" id="5MYJ"/>
<dbReference type="EMDB" id="EMD-3581"/>
<dbReference type="SMR" id="A2RJS1"/>
<dbReference type="STRING" id="416870.llmg_0932"/>
<dbReference type="GeneID" id="61109811"/>
<dbReference type="KEGG" id="llm:llmg_0932"/>
<dbReference type="eggNOG" id="COG0228">
    <property type="taxonomic scope" value="Bacteria"/>
</dbReference>
<dbReference type="HOGENOM" id="CLU_100590_5_0_9"/>
<dbReference type="OrthoDB" id="9807878at2"/>
<dbReference type="PhylomeDB" id="A2RJS1"/>
<dbReference type="Proteomes" id="UP000000364">
    <property type="component" value="Chromosome"/>
</dbReference>
<dbReference type="GO" id="GO:0005737">
    <property type="term" value="C:cytoplasm"/>
    <property type="evidence" value="ECO:0007669"/>
    <property type="project" value="UniProtKB-ARBA"/>
</dbReference>
<dbReference type="GO" id="GO:0015935">
    <property type="term" value="C:small ribosomal subunit"/>
    <property type="evidence" value="ECO:0007669"/>
    <property type="project" value="TreeGrafter"/>
</dbReference>
<dbReference type="GO" id="GO:0003735">
    <property type="term" value="F:structural constituent of ribosome"/>
    <property type="evidence" value="ECO:0007669"/>
    <property type="project" value="InterPro"/>
</dbReference>
<dbReference type="GO" id="GO:0006412">
    <property type="term" value="P:translation"/>
    <property type="evidence" value="ECO:0007669"/>
    <property type="project" value="UniProtKB-UniRule"/>
</dbReference>
<dbReference type="FunFam" id="3.30.1320.10:FF:000002">
    <property type="entry name" value="30S ribosomal protein S16"/>
    <property type="match status" value="1"/>
</dbReference>
<dbReference type="Gene3D" id="3.30.1320.10">
    <property type="match status" value="1"/>
</dbReference>
<dbReference type="HAMAP" id="MF_00385">
    <property type="entry name" value="Ribosomal_bS16"/>
    <property type="match status" value="1"/>
</dbReference>
<dbReference type="InterPro" id="IPR000307">
    <property type="entry name" value="Ribosomal_bS16"/>
</dbReference>
<dbReference type="InterPro" id="IPR023803">
    <property type="entry name" value="Ribosomal_bS16_dom_sf"/>
</dbReference>
<dbReference type="NCBIfam" id="TIGR00002">
    <property type="entry name" value="S16"/>
    <property type="match status" value="1"/>
</dbReference>
<dbReference type="PANTHER" id="PTHR12919">
    <property type="entry name" value="30S RIBOSOMAL PROTEIN S16"/>
    <property type="match status" value="1"/>
</dbReference>
<dbReference type="PANTHER" id="PTHR12919:SF20">
    <property type="entry name" value="SMALL RIBOSOMAL SUBUNIT PROTEIN BS16M"/>
    <property type="match status" value="1"/>
</dbReference>
<dbReference type="Pfam" id="PF00886">
    <property type="entry name" value="Ribosomal_S16"/>
    <property type="match status" value="1"/>
</dbReference>
<dbReference type="SUPFAM" id="SSF54565">
    <property type="entry name" value="Ribosomal protein S16"/>
    <property type="match status" value="1"/>
</dbReference>
<accession>A2RJS1</accession>